<sequence>MVPPIIYKYKRRKDRRLGRDDDSSVMMTRRRPDSDFIEVSDENRSFALFKEDDEKNRDLGLVDDGSTNLVLQCHDDGCSLEKDNSNSLDDLFSGFVYKGVRRRKRDDFGSITTSNLVSPQIADDDDDSVSDSHIERQECSEFHVEVRRVSPYFQGSTVSQQSKEGCDSDSVCSKEGCSKVQAKVPRVSPYFQASTISQCDSDIVSSSQSGRNYRKGSSKRQVKVRRVSPYFQESTVSEQPNQAPKGLRNYFKVVKVSRYFHADGIQVNESQKEKSRNVRKTPIVSPVLSLSQKTDDVYLRKTPDNTWVPPRSPCNLLQEDHWHDPWRVLVICMLLNKTSGAQTRGVISDLFGLCTDAKTATEVKEEEIENLIKPLGLQKKRTKMIQRLSLEYLQESWTHVTQLHGVGKYAADAYAIFCNGNWDRVKPNDHMLNYYWDYLRIRYKL</sequence>
<organism evidence="9">
    <name type="scientific">Arabidopsis thaliana</name>
    <name type="common">Mouse-ear cress</name>
    <dbReference type="NCBI Taxonomy" id="3702"/>
    <lineage>
        <taxon>Eukaryota</taxon>
        <taxon>Viridiplantae</taxon>
        <taxon>Streptophyta</taxon>
        <taxon>Embryophyta</taxon>
        <taxon>Tracheophyta</taxon>
        <taxon>Spermatophyta</taxon>
        <taxon>Magnoliopsida</taxon>
        <taxon>eudicotyledons</taxon>
        <taxon>Gunneridae</taxon>
        <taxon>Pentapetalae</taxon>
        <taxon>rosids</taxon>
        <taxon>malvids</taxon>
        <taxon>Brassicales</taxon>
        <taxon>Brassicaceae</taxon>
        <taxon>Camelineae</taxon>
        <taxon>Arabidopsis</taxon>
    </lineage>
</organism>
<protein>
    <recommendedName>
        <fullName evidence="4">Methyl-CpG-binding domain protein 4-like protein</fullName>
        <ecNumber evidence="6">3.2.2.-</ecNumber>
    </recommendedName>
    <alternativeName>
        <fullName evidence="4">Protein MBD4-like</fullName>
    </alternativeName>
</protein>
<accession>Q0IGK1</accession>
<accession>F4JFQ3</accession>
<accession>Q3EBA6</accession>
<accession>Q84WT3</accession>
<accession>Q8LB76</accession>
<accession>Q9SFC1</accession>
<keyword id="KW-0025">Alternative splicing</keyword>
<keyword id="KW-0227">DNA damage</keyword>
<keyword id="KW-0234">DNA repair</keyword>
<keyword id="KW-0378">Hydrolase</keyword>
<keyword id="KW-0539">Nucleus</keyword>
<keyword id="KW-1185">Reference proteome</keyword>
<dbReference type="EC" id="3.2.2.-" evidence="6"/>
<dbReference type="EMBL" id="AC013483">
    <property type="protein sequence ID" value="AAF21203.1"/>
    <property type="status" value="ALT_INIT"/>
    <property type="molecule type" value="Genomic_DNA"/>
</dbReference>
<dbReference type="EMBL" id="CP002686">
    <property type="protein sequence ID" value="AEE74620.1"/>
    <property type="molecule type" value="Genomic_DNA"/>
</dbReference>
<dbReference type="EMBL" id="CP002686">
    <property type="protein sequence ID" value="AEE74621.1"/>
    <property type="molecule type" value="Genomic_DNA"/>
</dbReference>
<dbReference type="EMBL" id="CP002686">
    <property type="protein sequence ID" value="AEE74622.1"/>
    <property type="molecule type" value="Genomic_DNA"/>
</dbReference>
<dbReference type="EMBL" id="CP002686">
    <property type="protein sequence ID" value="ANM65422.1"/>
    <property type="molecule type" value="Genomic_DNA"/>
</dbReference>
<dbReference type="EMBL" id="BT002799">
    <property type="protein sequence ID" value="AAO22623.1"/>
    <property type="molecule type" value="mRNA"/>
</dbReference>
<dbReference type="EMBL" id="BT028919">
    <property type="protein sequence ID" value="ABI49466.1"/>
    <property type="molecule type" value="mRNA"/>
</dbReference>
<dbReference type="EMBL" id="AY087374">
    <property type="protein sequence ID" value="AAM64924.1"/>
    <property type="molecule type" value="mRNA"/>
</dbReference>
<dbReference type="RefSeq" id="NP_001327391.1">
    <molecule id="Q0IGK1-4"/>
    <property type="nucleotide sequence ID" value="NM_001337751.1"/>
</dbReference>
<dbReference type="RefSeq" id="NP_566325.1">
    <molecule id="Q0IGK1-3"/>
    <property type="nucleotide sequence ID" value="NM_111672.3"/>
</dbReference>
<dbReference type="RefSeq" id="NP_974252.1">
    <molecule id="Q0IGK1-2"/>
    <property type="nucleotide sequence ID" value="NM_202523.1"/>
</dbReference>
<dbReference type="RefSeq" id="NP_974253.1">
    <molecule id="Q0IGK1-1"/>
    <property type="nucleotide sequence ID" value="NM_202524.2"/>
</dbReference>
<dbReference type="SMR" id="Q0IGK1"/>
<dbReference type="FunCoup" id="Q0IGK1">
    <property type="interactions" value="2"/>
</dbReference>
<dbReference type="STRING" id="3702.Q0IGK1"/>
<dbReference type="PaxDb" id="3702-AT3G07930.3"/>
<dbReference type="EnsemblPlants" id="AT3G07930.1">
    <molecule id="Q0IGK1-3"/>
    <property type="protein sequence ID" value="AT3G07930.1"/>
    <property type="gene ID" value="AT3G07930"/>
</dbReference>
<dbReference type="EnsemblPlants" id="AT3G07930.2">
    <molecule id="Q0IGK1-2"/>
    <property type="protein sequence ID" value="AT3G07930.2"/>
    <property type="gene ID" value="AT3G07930"/>
</dbReference>
<dbReference type="EnsemblPlants" id="AT3G07930.3">
    <molecule id="Q0IGK1-1"/>
    <property type="protein sequence ID" value="AT3G07930.3"/>
    <property type="gene ID" value="AT3G07930"/>
</dbReference>
<dbReference type="EnsemblPlants" id="AT3G07930.4">
    <molecule id="Q0IGK1-4"/>
    <property type="protein sequence ID" value="AT3G07930.4"/>
    <property type="gene ID" value="AT3G07930"/>
</dbReference>
<dbReference type="GeneID" id="819984"/>
<dbReference type="Gramene" id="AT3G07930.1">
    <molecule id="Q0IGK1-3"/>
    <property type="protein sequence ID" value="AT3G07930.1"/>
    <property type="gene ID" value="AT3G07930"/>
</dbReference>
<dbReference type="Gramene" id="AT3G07930.2">
    <molecule id="Q0IGK1-2"/>
    <property type="protein sequence ID" value="AT3G07930.2"/>
    <property type="gene ID" value="AT3G07930"/>
</dbReference>
<dbReference type="Gramene" id="AT3G07930.3">
    <molecule id="Q0IGK1-1"/>
    <property type="protein sequence ID" value="AT3G07930.3"/>
    <property type="gene ID" value="AT3G07930"/>
</dbReference>
<dbReference type="Gramene" id="AT3G07930.4">
    <molecule id="Q0IGK1-4"/>
    <property type="protein sequence ID" value="AT3G07930.4"/>
    <property type="gene ID" value="AT3G07930"/>
</dbReference>
<dbReference type="KEGG" id="ath:AT3G07930"/>
<dbReference type="Araport" id="AT3G07930"/>
<dbReference type="TAIR" id="AT3G07930"/>
<dbReference type="eggNOG" id="ENOG502RY32">
    <property type="taxonomic scope" value="Eukaryota"/>
</dbReference>
<dbReference type="HOGENOM" id="CLU_051571_0_0_1"/>
<dbReference type="InParanoid" id="Q0IGK1"/>
<dbReference type="OMA" id="PNQPRDM"/>
<dbReference type="PhylomeDB" id="Q0IGK1"/>
<dbReference type="PRO" id="PR:Q0IGK1"/>
<dbReference type="Proteomes" id="UP000006548">
    <property type="component" value="Chromosome 3"/>
</dbReference>
<dbReference type="ExpressionAtlas" id="Q0IGK1">
    <property type="expression patterns" value="baseline and differential"/>
</dbReference>
<dbReference type="GO" id="GO:0005634">
    <property type="term" value="C:nucleus"/>
    <property type="evidence" value="ECO:0007669"/>
    <property type="project" value="UniProtKB-SubCell"/>
</dbReference>
<dbReference type="GO" id="GO:0003677">
    <property type="term" value="F:DNA binding"/>
    <property type="evidence" value="ECO:0007669"/>
    <property type="project" value="InterPro"/>
</dbReference>
<dbReference type="GO" id="GO:0016787">
    <property type="term" value="F:hydrolase activity"/>
    <property type="evidence" value="ECO:0007669"/>
    <property type="project" value="UniProtKB-KW"/>
</dbReference>
<dbReference type="GO" id="GO:0006281">
    <property type="term" value="P:DNA repair"/>
    <property type="evidence" value="ECO:0007669"/>
    <property type="project" value="UniProtKB-KW"/>
</dbReference>
<dbReference type="FunFam" id="1.10.340.30:FF:000007">
    <property type="entry name" value="Methyl-CpG-binding domain protein 4"/>
    <property type="match status" value="1"/>
</dbReference>
<dbReference type="Gene3D" id="1.10.340.30">
    <property type="entry name" value="Hypothetical protein, domain 2"/>
    <property type="match status" value="1"/>
</dbReference>
<dbReference type="InterPro" id="IPR011257">
    <property type="entry name" value="DNA_glycosylase"/>
</dbReference>
<dbReference type="InterPro" id="IPR045138">
    <property type="entry name" value="MeCP2/MBD4"/>
</dbReference>
<dbReference type="PANTHER" id="PTHR15074:SF0">
    <property type="entry name" value="METHYL-CPG-BINDING DOMAIN PROTEIN 4-LIKE PROTEIN"/>
    <property type="match status" value="1"/>
</dbReference>
<dbReference type="PANTHER" id="PTHR15074">
    <property type="entry name" value="METHYL-CPG-BINDING PROTEIN"/>
    <property type="match status" value="1"/>
</dbReference>
<dbReference type="SUPFAM" id="SSF48150">
    <property type="entry name" value="DNA-glycosylase"/>
    <property type="match status" value="1"/>
</dbReference>
<evidence type="ECO:0000250" key="1"/>
<evidence type="ECO:0000269" key="2">
    <source>
    </source>
</evidence>
<evidence type="ECO:0000269" key="3">
    <source>
    </source>
</evidence>
<evidence type="ECO:0000303" key="4">
    <source>
    </source>
</evidence>
<evidence type="ECO:0000303" key="5">
    <source>
    </source>
</evidence>
<evidence type="ECO:0000305" key="6"/>
<evidence type="ECO:0000312" key="7">
    <source>
        <dbReference type="Araport" id="AT3G07930"/>
    </source>
</evidence>
<evidence type="ECO:0000312" key="8">
    <source>
        <dbReference type="EMBL" id="AAF21203.1"/>
    </source>
</evidence>
<evidence type="ECO:0000312" key="9">
    <source>
        <dbReference type="EMBL" id="ABI49466.1"/>
    </source>
</evidence>
<comment type="function">
    <text evidence="2 3">Monofunctional DNA glycosylase targeting U:G and T:G mispairs (PubMed:23994068). Excises uracil derivatives and exhibits a preference for a CpG sequence context, irrespective of the methylation status of the complementary strand (PubMed:23994068). The activity follows a biphasic kinetics, with an initial burst of product accumulation followed by a slower phase (PubMed:23994068). Specifically binds its reaction product (PubMed:23994068). Triggers the base excision repair (BER) pathway (PubMed:25900572).</text>
</comment>
<comment type="subcellular location">
    <subcellularLocation>
        <location evidence="3">Nucleus</location>
    </subcellularLocation>
</comment>
<comment type="alternative products">
    <event type="alternative splicing"/>
    <isoform>
        <id>Q0IGK1-1</id>
        <name>1</name>
        <name evidence="5">MBD4L3</name>
        <sequence type="displayed"/>
    </isoform>
    <isoform>
        <id>Q0IGK1-2</id>
        <name>2</name>
        <sequence type="described" ref="VSP_057788 VSP_057790"/>
    </isoform>
    <isoform>
        <id>Q0IGK1-3</id>
        <name>3</name>
        <sequence type="described" ref="VSP_057787 VSP_057789"/>
    </isoform>
    <isoform>
        <id>Q0IGK1-4</id>
        <name>4</name>
        <name evidence="5">MBD4L4</name>
        <sequence type="described" ref="VSP_057785"/>
    </isoform>
    <isoform>
        <id>Q0IGK1-5</id>
        <name>5</name>
        <sequence type="described" ref="VSP_057786"/>
    </isoform>
</comment>
<comment type="tissue specificity">
    <text evidence="3">Isoform 1 and isoform 4: Expressed in leaves and flowers, but not in roots or stems.</text>
</comment>
<comment type="domain">
    <text evidence="2">The N-terminal domain (1-290) does not play any direct role in catalysis and is not required for product binding.</text>
</comment>
<comment type="caution">
    <text evidence="4">This putative homolog of vertebrate MBD4 DNA glycosylase is designated as MBD4L (MBD4-like) to avoid nomenclature confusion with a protein with a conserved MBD but no DNA glycosylase domain already called MBD4 (AC Q9LYB9).</text>
</comment>
<comment type="sequence caution" evidence="6">
    <conflict type="erroneous initiation">
        <sequence resource="EMBL-CDS" id="AAF21203"/>
    </conflict>
    <text>Truncated N-terminus.</text>
</comment>
<proteinExistence type="evidence at protein level"/>
<gene>
    <name evidence="4" type="primary">MBD4L</name>
    <name evidence="7" type="ordered locus">At3g07930</name>
    <name evidence="8" type="ORF">F17A17.27</name>
</gene>
<feature type="chain" id="PRO_0000433478" description="Methyl-CpG-binding domain protein 4-like protein">
    <location>
        <begin position="1"/>
        <end position="445"/>
    </location>
</feature>
<feature type="active site" evidence="1">
    <location>
        <position position="429"/>
    </location>
</feature>
<feature type="splice variant" id="VSP_057785" description="In isoform 4.">
    <location>
        <begin position="39"/>
        <end position="154"/>
    </location>
</feature>
<feature type="splice variant" id="VSP_057786" description="In isoform 5.">
    <location>
        <begin position="139"/>
        <end position="176"/>
    </location>
</feature>
<feature type="splice variant" id="VSP_057787" description="In isoform 3.">
    <original>GAQTRGVISDLFG</original>
    <variation>DAGSDIRLVWIVY</variation>
    <location>
        <begin position="340"/>
        <end position="352"/>
    </location>
</feature>
<feature type="splice variant" id="VSP_057788" description="In isoform 2.">
    <original>TRGVISDLFGLCTDAK</original>
    <variation>VIADAGSDIRLVWIVY</variation>
    <location>
        <begin position="343"/>
        <end position="358"/>
    </location>
</feature>
<feature type="splice variant" id="VSP_057789" description="In isoform 3.">
    <location>
        <begin position="353"/>
        <end position="445"/>
    </location>
</feature>
<feature type="splice variant" id="VSP_057790" description="In isoform 2.">
    <location>
        <begin position="359"/>
        <end position="445"/>
    </location>
</feature>
<feature type="mutagenesis site" description="Reduces activity 160-fold." evidence="2">
    <original>D</original>
    <variation>A</variation>
    <location>
        <position position="429"/>
    </location>
</feature>
<feature type="sequence conflict" description="In Ref. 5; AAM64924." evidence="6" ref="5">
    <original>C</original>
    <variation>W</variation>
    <location>
        <position position="139"/>
    </location>
</feature>
<feature type="sequence conflict" description="In Ref. 3; AAO22623." evidence="6" ref="3">
    <original>V</original>
    <variation>A</variation>
    <location>
        <position position="224"/>
    </location>
</feature>
<name>MBD4L_ARATH</name>
<reference key="1">
    <citation type="journal article" date="2000" name="Nature">
        <title>Sequence and analysis of chromosome 3 of the plant Arabidopsis thaliana.</title>
        <authorList>
            <person name="Salanoubat M."/>
            <person name="Lemcke K."/>
            <person name="Rieger M."/>
            <person name="Ansorge W."/>
            <person name="Unseld M."/>
            <person name="Fartmann B."/>
            <person name="Valle G."/>
            <person name="Bloecker H."/>
            <person name="Perez-Alonso M."/>
            <person name="Obermaier B."/>
            <person name="Delseny M."/>
            <person name="Boutry M."/>
            <person name="Grivell L.A."/>
            <person name="Mache R."/>
            <person name="Puigdomenech P."/>
            <person name="De Simone V."/>
            <person name="Choisne N."/>
            <person name="Artiguenave F."/>
            <person name="Robert C."/>
            <person name="Brottier P."/>
            <person name="Wincker P."/>
            <person name="Cattolico L."/>
            <person name="Weissenbach J."/>
            <person name="Saurin W."/>
            <person name="Quetier F."/>
            <person name="Schaefer M."/>
            <person name="Mueller-Auer S."/>
            <person name="Gabel C."/>
            <person name="Fuchs M."/>
            <person name="Benes V."/>
            <person name="Wurmbach E."/>
            <person name="Drzonek H."/>
            <person name="Erfle H."/>
            <person name="Jordan N."/>
            <person name="Bangert S."/>
            <person name="Wiedelmann R."/>
            <person name="Kranz H."/>
            <person name="Voss H."/>
            <person name="Holland R."/>
            <person name="Brandt P."/>
            <person name="Nyakatura G."/>
            <person name="Vezzi A."/>
            <person name="D'Angelo M."/>
            <person name="Pallavicini A."/>
            <person name="Toppo S."/>
            <person name="Simionati B."/>
            <person name="Conrad A."/>
            <person name="Hornischer K."/>
            <person name="Kauer G."/>
            <person name="Loehnert T.-H."/>
            <person name="Nordsiek G."/>
            <person name="Reichelt J."/>
            <person name="Scharfe M."/>
            <person name="Schoen O."/>
            <person name="Bargues M."/>
            <person name="Terol J."/>
            <person name="Climent J."/>
            <person name="Navarro P."/>
            <person name="Collado C."/>
            <person name="Perez-Perez A."/>
            <person name="Ottenwaelder B."/>
            <person name="Duchemin D."/>
            <person name="Cooke R."/>
            <person name="Laudie M."/>
            <person name="Berger-Llauro C."/>
            <person name="Purnelle B."/>
            <person name="Masuy D."/>
            <person name="de Haan M."/>
            <person name="Maarse A.C."/>
            <person name="Alcaraz J.-P."/>
            <person name="Cottet A."/>
            <person name="Casacuberta E."/>
            <person name="Monfort A."/>
            <person name="Argiriou A."/>
            <person name="Flores M."/>
            <person name="Liguori R."/>
            <person name="Vitale D."/>
            <person name="Mannhaupt G."/>
            <person name="Haase D."/>
            <person name="Schoof H."/>
            <person name="Rudd S."/>
            <person name="Zaccaria P."/>
            <person name="Mewes H.-W."/>
            <person name="Mayer K.F.X."/>
            <person name="Kaul S."/>
            <person name="Town C.D."/>
            <person name="Koo H.L."/>
            <person name="Tallon L.J."/>
            <person name="Jenkins J."/>
            <person name="Rooney T."/>
            <person name="Rizzo M."/>
            <person name="Walts A."/>
            <person name="Utterback T."/>
            <person name="Fujii C.Y."/>
            <person name="Shea T.P."/>
            <person name="Creasy T.H."/>
            <person name="Haas B."/>
            <person name="Maiti R."/>
            <person name="Wu D."/>
            <person name="Peterson J."/>
            <person name="Van Aken S."/>
            <person name="Pai G."/>
            <person name="Militscher J."/>
            <person name="Sellers P."/>
            <person name="Gill J.E."/>
            <person name="Feldblyum T.V."/>
            <person name="Preuss D."/>
            <person name="Lin X."/>
            <person name="Nierman W.C."/>
            <person name="Salzberg S.L."/>
            <person name="White O."/>
            <person name="Venter J.C."/>
            <person name="Fraser C.M."/>
            <person name="Kaneko T."/>
            <person name="Nakamura Y."/>
            <person name="Sato S."/>
            <person name="Kato T."/>
            <person name="Asamizu E."/>
            <person name="Sasamoto S."/>
            <person name="Kimura T."/>
            <person name="Idesawa K."/>
            <person name="Kawashima K."/>
            <person name="Kishida Y."/>
            <person name="Kiyokawa C."/>
            <person name="Kohara M."/>
            <person name="Matsumoto M."/>
            <person name="Matsuno A."/>
            <person name="Muraki A."/>
            <person name="Nakayama S."/>
            <person name="Nakazaki N."/>
            <person name="Shinpo S."/>
            <person name="Takeuchi C."/>
            <person name="Wada T."/>
            <person name="Watanabe A."/>
            <person name="Yamada M."/>
            <person name="Yasuda M."/>
            <person name="Tabata S."/>
        </authorList>
    </citation>
    <scope>NUCLEOTIDE SEQUENCE [LARGE SCALE GENOMIC DNA]</scope>
    <source>
        <strain>cv. Columbia</strain>
    </source>
</reference>
<reference key="2">
    <citation type="journal article" date="2017" name="Plant J.">
        <title>Araport11: a complete reannotation of the Arabidopsis thaliana reference genome.</title>
        <authorList>
            <person name="Cheng C.Y."/>
            <person name="Krishnakumar V."/>
            <person name="Chan A.P."/>
            <person name="Thibaud-Nissen F."/>
            <person name="Schobel S."/>
            <person name="Town C.D."/>
        </authorList>
    </citation>
    <scope>GENOME REANNOTATION</scope>
    <source>
        <strain>cv. Columbia</strain>
    </source>
</reference>
<reference key="3">
    <citation type="journal article" date="2003" name="Science">
        <title>Empirical analysis of transcriptional activity in the Arabidopsis genome.</title>
        <authorList>
            <person name="Yamada K."/>
            <person name="Lim J."/>
            <person name="Dale J.M."/>
            <person name="Chen H."/>
            <person name="Shinn P."/>
            <person name="Palm C.J."/>
            <person name="Southwick A.M."/>
            <person name="Wu H.C."/>
            <person name="Kim C.J."/>
            <person name="Nguyen M."/>
            <person name="Pham P.K."/>
            <person name="Cheuk R.F."/>
            <person name="Karlin-Newmann G."/>
            <person name="Liu S.X."/>
            <person name="Lam B."/>
            <person name="Sakano H."/>
            <person name="Wu T."/>
            <person name="Yu G."/>
            <person name="Miranda M."/>
            <person name="Quach H.L."/>
            <person name="Tripp M."/>
            <person name="Chang C.H."/>
            <person name="Lee J.M."/>
            <person name="Toriumi M.J."/>
            <person name="Chan M.M."/>
            <person name="Tang C.C."/>
            <person name="Onodera C.S."/>
            <person name="Deng J.M."/>
            <person name="Akiyama K."/>
            <person name="Ansari Y."/>
            <person name="Arakawa T."/>
            <person name="Banh J."/>
            <person name="Banno F."/>
            <person name="Bowser L."/>
            <person name="Brooks S.Y."/>
            <person name="Carninci P."/>
            <person name="Chao Q."/>
            <person name="Choy N."/>
            <person name="Enju A."/>
            <person name="Goldsmith A.D."/>
            <person name="Gurjal M."/>
            <person name="Hansen N.F."/>
            <person name="Hayashizaki Y."/>
            <person name="Johnson-Hopson C."/>
            <person name="Hsuan V.W."/>
            <person name="Iida K."/>
            <person name="Karnes M."/>
            <person name="Khan S."/>
            <person name="Koesema E."/>
            <person name="Ishida J."/>
            <person name="Jiang P.X."/>
            <person name="Jones T."/>
            <person name="Kawai J."/>
            <person name="Kamiya A."/>
            <person name="Meyers C."/>
            <person name="Nakajima M."/>
            <person name="Narusaka M."/>
            <person name="Seki M."/>
            <person name="Sakurai T."/>
            <person name="Satou M."/>
            <person name="Tamse R."/>
            <person name="Vaysberg M."/>
            <person name="Wallender E.K."/>
            <person name="Wong C."/>
            <person name="Yamamura Y."/>
            <person name="Yuan S."/>
            <person name="Shinozaki K."/>
            <person name="Davis R.W."/>
            <person name="Theologis A."/>
            <person name="Ecker J.R."/>
        </authorList>
    </citation>
    <scope>NUCLEOTIDE SEQUENCE [LARGE SCALE MRNA] (ISOFORM 5)</scope>
    <source>
        <strain>cv. Columbia</strain>
    </source>
</reference>
<reference key="4">
    <citation type="submission" date="2006-09" db="EMBL/GenBank/DDBJ databases">
        <title>Arabidopsis ORF Clones.</title>
        <authorList>
            <person name="Bautista V.R."/>
            <person name="Kim C.J."/>
            <person name="Chen H."/>
            <person name="Quinitio C."/>
            <person name="Ecker J.R."/>
        </authorList>
    </citation>
    <scope>NUCLEOTIDE SEQUENCE [LARGE SCALE MRNA] (ISOFORM 1)</scope>
    <source>
        <strain>cv. Columbia</strain>
    </source>
</reference>
<reference key="5">
    <citation type="submission" date="2002-03" db="EMBL/GenBank/DDBJ databases">
        <title>Full-length cDNA from Arabidopsis thaliana.</title>
        <authorList>
            <person name="Brover V.V."/>
            <person name="Troukhan M.E."/>
            <person name="Alexandrov N.A."/>
            <person name="Lu Y.-P."/>
            <person name="Flavell R.B."/>
            <person name="Feldmann K.A."/>
        </authorList>
    </citation>
    <scope>NUCLEOTIDE SEQUENCE [LARGE SCALE MRNA] (ISOFORM 3)</scope>
</reference>
<reference key="6">
    <citation type="journal article" date="2013" name="DNA Repair">
        <title>Molecular characterization of a putative plant homolog of MBD4 DNA glycosylase.</title>
        <authorList>
            <person name="Ramiro-Merina A."/>
            <person name="Ariza R.R."/>
            <person name="Roldan-Arjona T."/>
        </authorList>
    </citation>
    <scope>IDENTIFICATION</scope>
    <scope>NOMENCLATURE</scope>
    <scope>3D-STRUCTURE MODELING</scope>
    <scope>FUNCTION</scope>
    <scope>MUTAGENESIS OF ASP-429</scope>
    <scope>DOMAIN</scope>
</reference>
<reference key="7">
    <citation type="journal article" date="2015" name="Plant Sci.">
        <title>Expression and function of AtMBD4L, the single gene encoding the nuclear DNA glycosylase MBD4L in Arabidopsis.</title>
        <authorList>
            <person name="Nota F."/>
            <person name="Cambiagno D.A."/>
            <person name="Ribone P."/>
            <person name="Alvarez M.E."/>
        </authorList>
    </citation>
    <scope>FUNCTION</scope>
    <scope>ALTERNATIVE SPLICING (ISOFORMS 1 AND 4)</scope>
    <scope>TISSUE SPECIFICITY (ISOFORMS 1 AND 4)</scope>
    <scope>SUBCELLULAR LOCATION</scope>
</reference>